<reference key="1">
    <citation type="journal article" date="2011" name="Genome Biol.">
        <title>Comparative and functional genomics provide insights into the pathogenicity of dermatophytic fungi.</title>
        <authorList>
            <person name="Burmester A."/>
            <person name="Shelest E."/>
            <person name="Gloeckner G."/>
            <person name="Heddergott C."/>
            <person name="Schindler S."/>
            <person name="Staib P."/>
            <person name="Heidel A."/>
            <person name="Felder M."/>
            <person name="Petzold A."/>
            <person name="Szafranski K."/>
            <person name="Feuermann M."/>
            <person name="Pedruzzi I."/>
            <person name="Priebe S."/>
            <person name="Groth M."/>
            <person name="Winkler R."/>
            <person name="Li W."/>
            <person name="Kniemeyer O."/>
            <person name="Schroeckh V."/>
            <person name="Hertweck C."/>
            <person name="Hube B."/>
            <person name="White T.C."/>
            <person name="Platzer M."/>
            <person name="Guthke R."/>
            <person name="Heitman J."/>
            <person name="Woestemeyer J."/>
            <person name="Zipfel P.F."/>
            <person name="Monod M."/>
            <person name="Brakhage A.A."/>
        </authorList>
    </citation>
    <scope>NUCLEOTIDE SEQUENCE [LARGE SCALE GENOMIC DNA]</scope>
    <source>
        <strain>ATCC MYA-4681 / CBS 112371</strain>
    </source>
</reference>
<accession>D4AIC4</accession>
<proteinExistence type="inferred from homology"/>
<protein>
    <recommendedName>
        <fullName>Probable aspartic-type endopeptidase ARB_04018</fullName>
        <ecNumber>3.4.23.-</ecNumber>
    </recommendedName>
</protein>
<feature type="signal peptide" evidence="2">
    <location>
        <begin position="1"/>
        <end position="21"/>
    </location>
</feature>
<feature type="chain" id="PRO_0000406414" description="Probable aspartic-type endopeptidase ARB_04018">
    <location>
        <begin position="22"/>
        <end position="370"/>
    </location>
</feature>
<feature type="domain" description="Peptidase A1" evidence="3">
    <location>
        <begin position="94"/>
        <end position="367"/>
    </location>
</feature>
<feature type="active site" evidence="4">
    <location>
        <position position="110"/>
    </location>
</feature>
<feature type="active site" evidence="4">
    <location>
        <position position="261"/>
    </location>
</feature>
<feature type="glycosylation site" description="N-linked (GlcNAc...) asparagine" evidence="2">
    <location>
        <position position="80"/>
    </location>
</feature>
<feature type="glycosylation site" description="N-linked (GlcNAc...) asparagine" evidence="2">
    <location>
        <position position="102"/>
    </location>
</feature>
<feature type="glycosylation site" description="N-linked (GlcNAc...) asparagine" evidence="2">
    <location>
        <position position="251"/>
    </location>
</feature>
<feature type="glycosylation site" description="N-linked (GlcNAc...) asparagine" evidence="2">
    <location>
        <position position="298"/>
    </location>
</feature>
<keyword id="KW-0064">Aspartyl protease</keyword>
<keyword id="KW-0325">Glycoprotein</keyword>
<keyword id="KW-0378">Hydrolase</keyword>
<keyword id="KW-0645">Protease</keyword>
<keyword id="KW-1185">Reference proteome</keyword>
<keyword id="KW-0964">Secreted</keyword>
<keyword id="KW-0732">Signal</keyword>
<keyword id="KW-0843">Virulence</keyword>
<organism>
    <name type="scientific">Arthroderma benhamiae (strain ATCC MYA-4681 / CBS 112371)</name>
    <name type="common">Trichophyton mentagrophytes</name>
    <dbReference type="NCBI Taxonomy" id="663331"/>
    <lineage>
        <taxon>Eukaryota</taxon>
        <taxon>Fungi</taxon>
        <taxon>Dikarya</taxon>
        <taxon>Ascomycota</taxon>
        <taxon>Pezizomycotina</taxon>
        <taxon>Eurotiomycetes</taxon>
        <taxon>Eurotiomycetidae</taxon>
        <taxon>Onygenales</taxon>
        <taxon>Arthrodermataceae</taxon>
        <taxon>Trichophyton</taxon>
    </lineage>
</organism>
<name>Y4018_ARTBC</name>
<comment type="function">
    <text evidence="1">Probable aspartic-type endopeptidase which contributes to virulence.</text>
</comment>
<comment type="subcellular location">
    <subcellularLocation>
        <location evidence="1">Secreted</location>
    </subcellularLocation>
</comment>
<comment type="similarity">
    <text evidence="5">Belongs to the peptidase A1 family.</text>
</comment>
<sequence>MWHSPFSTAFTLFLGFFTLTLALPTNSLATTGHFTIEQRLINTIKSDWPPKELWRGLRKHHRPLPPAVSRISRHGGSFANGTVKVTPDEYDTEFVNEITIGNDTLFVDIDTGSSDFWVFSSQLPEQSQRNHRIYHPEKTGIKLPKQIWETSYGDGTGAAGNVFLDKVNLAGLEVSSQVTPKKQKTWFGNIMERLEKPIFTACLKHKAPGFYDFGFIDKTKHIGNPSYLPVDNSRGWWETTFNGFSTGPSDNSTYRFRAVVDTGTTFMLLPREITEQYYSSITGSAFDRENGGWTFPCNATLPEFAIHVNDYKAIVPGEHINWAQIPGTNTCFGGIQPVDRSPAVLGGSFLKSQFVIFDHDGPKMGFAAQR</sequence>
<evidence type="ECO:0000250" key="1"/>
<evidence type="ECO:0000255" key="2"/>
<evidence type="ECO:0000255" key="3">
    <source>
        <dbReference type="PROSITE-ProRule" id="PRU01103"/>
    </source>
</evidence>
<evidence type="ECO:0000255" key="4">
    <source>
        <dbReference type="PROSITE-ProRule" id="PRU10094"/>
    </source>
</evidence>
<evidence type="ECO:0000305" key="5"/>
<dbReference type="EC" id="3.4.23.-"/>
<dbReference type="EMBL" id="ABSU01000001">
    <property type="protein sequence ID" value="EFE36497.1"/>
    <property type="molecule type" value="Genomic_DNA"/>
</dbReference>
<dbReference type="RefSeq" id="XP_003017142.1">
    <property type="nucleotide sequence ID" value="XM_003017096.1"/>
</dbReference>
<dbReference type="SMR" id="D4AIC4"/>
<dbReference type="GeneID" id="9527107"/>
<dbReference type="KEGG" id="abe:ARB_04018"/>
<dbReference type="eggNOG" id="KOG1339">
    <property type="taxonomic scope" value="Eukaryota"/>
</dbReference>
<dbReference type="HOGENOM" id="CLU_013253_0_1_1"/>
<dbReference type="OMA" id="HRIYHPE"/>
<dbReference type="OrthoDB" id="2747330at2759"/>
<dbReference type="Proteomes" id="UP000008866">
    <property type="component" value="Unassembled WGS sequence"/>
</dbReference>
<dbReference type="GO" id="GO:0005576">
    <property type="term" value="C:extracellular region"/>
    <property type="evidence" value="ECO:0007669"/>
    <property type="project" value="UniProtKB-SubCell"/>
</dbReference>
<dbReference type="GO" id="GO:0004190">
    <property type="term" value="F:aspartic-type endopeptidase activity"/>
    <property type="evidence" value="ECO:0007669"/>
    <property type="project" value="UniProtKB-KW"/>
</dbReference>
<dbReference type="GO" id="GO:0006508">
    <property type="term" value="P:proteolysis"/>
    <property type="evidence" value="ECO:0007669"/>
    <property type="project" value="UniProtKB-KW"/>
</dbReference>
<dbReference type="CDD" id="cd06097">
    <property type="entry name" value="Aspergillopepsin_like"/>
    <property type="match status" value="1"/>
</dbReference>
<dbReference type="Gene3D" id="2.40.70.10">
    <property type="entry name" value="Acid Proteases"/>
    <property type="match status" value="2"/>
</dbReference>
<dbReference type="InterPro" id="IPR001461">
    <property type="entry name" value="Aspartic_peptidase_A1"/>
</dbReference>
<dbReference type="InterPro" id="IPR001969">
    <property type="entry name" value="Aspartic_peptidase_AS"/>
</dbReference>
<dbReference type="InterPro" id="IPR034163">
    <property type="entry name" value="Aspergillopepsin-like_cat_dom"/>
</dbReference>
<dbReference type="InterPro" id="IPR033121">
    <property type="entry name" value="PEPTIDASE_A1"/>
</dbReference>
<dbReference type="InterPro" id="IPR021109">
    <property type="entry name" value="Peptidase_aspartic_dom_sf"/>
</dbReference>
<dbReference type="PANTHER" id="PTHR47966:SF2">
    <property type="entry name" value="ASPERGILLOPEPSIN-1-RELATED"/>
    <property type="match status" value="1"/>
</dbReference>
<dbReference type="PANTHER" id="PTHR47966">
    <property type="entry name" value="BETA-SITE APP-CLEAVING ENZYME, ISOFORM A-RELATED"/>
    <property type="match status" value="1"/>
</dbReference>
<dbReference type="Pfam" id="PF00026">
    <property type="entry name" value="Asp"/>
    <property type="match status" value="2"/>
</dbReference>
<dbReference type="PRINTS" id="PR00792">
    <property type="entry name" value="PEPSIN"/>
</dbReference>
<dbReference type="SUPFAM" id="SSF50630">
    <property type="entry name" value="Acid proteases"/>
    <property type="match status" value="1"/>
</dbReference>
<dbReference type="PROSITE" id="PS00141">
    <property type="entry name" value="ASP_PROTEASE"/>
    <property type="match status" value="2"/>
</dbReference>
<dbReference type="PROSITE" id="PS51767">
    <property type="entry name" value="PEPTIDASE_A1"/>
    <property type="match status" value="1"/>
</dbReference>
<gene>
    <name type="ORF">ARB_04018</name>
</gene>